<keyword id="KW-0688">Ribosomal frameshifting</keyword>
<proteinExistence type="predicted"/>
<dbReference type="EMBL" id="M20562">
    <property type="status" value="NOT_ANNOTATED_CDS"/>
    <property type="molecule type" value="Genomic_RNA"/>
</dbReference>
<dbReference type="Proteomes" id="UP000008247">
    <property type="component" value="Genome"/>
</dbReference>
<dbReference type="GO" id="GO:0075523">
    <property type="term" value="P:viral translational frameshifting"/>
    <property type="evidence" value="ECO:0007669"/>
    <property type="project" value="UniProtKB-KW"/>
</dbReference>
<comment type="alternative products">
    <event type="ribosomal frameshifting"/>
    <isoform>
        <id>P0DOK5-1</id>
        <name>2B*</name>
        <sequence type="displayed"/>
    </isoform>
    <isoform>
        <id>P08545-1</id>
        <name>Genome polyprotein</name>
        <sequence type="external"/>
    </isoform>
</comment>
<comment type="miscellaneous">
    <molecule>Isoform 2B*</molecule>
    <text evidence="1 2">Produced by -1 ribosomal frameshifting (PubMed:26063423). The N-terminus is translated following a ribosomal skip event (Probable).</text>
</comment>
<accession>P0DOK5</accession>
<feature type="chain" id="PRO_0000446220" description="Protein 2B*">
    <location>
        <begin position="1"/>
        <end position="14"/>
    </location>
</feature>
<protein>
    <recommendedName>
        <fullName>Protein 2B*</fullName>
    </recommendedName>
</protein>
<organismHost>
    <name type="scientific">Mus musculus</name>
    <name type="common">Mouse</name>
    <dbReference type="NCBI Taxonomy" id="10090"/>
</organismHost>
<organism>
    <name type="scientific">Theiler's murine encephalomyelitis virus (strain GDVII)</name>
    <name type="common">TMEV</name>
    <dbReference type="NCBI Taxonomy" id="12127"/>
    <lineage>
        <taxon>Viruses</taxon>
        <taxon>Riboviria</taxon>
        <taxon>Orthornavirae</taxon>
        <taxon>Pisuviricota</taxon>
        <taxon>Pisoniviricetes</taxon>
        <taxon>Picornavirales</taxon>
        <taxon>Picornaviridae</taxon>
        <taxon>Caphthovirinae</taxon>
        <taxon>Cardiovirus</taxon>
        <taxon>Cardiovirus B</taxon>
    </lineage>
</organism>
<reference key="1">
    <citation type="journal article" date="1988" name="Virology">
        <title>Insights into Theiler's virus neurovirulence based on a genomic comparison of the neurovirulent GDVII and less virulent BeAn strains.</title>
        <authorList>
            <person name="Pevear D.C."/>
            <person name="Borkowski J."/>
            <person name="Calenoff M."/>
            <person name="Oh C.K."/>
            <person name="Ostrawski B."/>
            <person name="Lipton H.L."/>
        </authorList>
    </citation>
    <scope>NUCLEOTIDE SEQUENCE [GENOMIC RNA]</scope>
</reference>
<reference key="2">
    <citation type="journal article" date="2015" name="J. Virol.">
        <title>Characterization of Ribosomal Frameshifting in Theiler's Murine Encephalomyelitis Virus.</title>
        <authorList>
            <person name="Finch L.K."/>
            <person name="Ling R."/>
            <person name="Napthine S."/>
            <person name="Olspert A."/>
            <person name="Michiels T."/>
            <person name="Lardinois C."/>
            <person name="Bell S."/>
            <person name="Loughran G."/>
            <person name="Brierley I."/>
            <person name="Firth A.E."/>
        </authorList>
    </citation>
    <scope>RIBOSOMAL FRAMESHIFT</scope>
</reference>
<name>ALT2B_TMEVG</name>
<sequence>PVQSVFSATRCGAN</sequence>
<evidence type="ECO:0000269" key="1">
    <source>
    </source>
</evidence>
<evidence type="ECO:0000305" key="2"/>